<evidence type="ECO:0000250" key="1"/>
<evidence type="ECO:0000250" key="2">
    <source>
        <dbReference type="UniProtKB" id="P04608"/>
    </source>
</evidence>
<evidence type="ECO:0000255" key="3"/>
<evidence type="ECO:0000256" key="4">
    <source>
        <dbReference type="SAM" id="MobiDB-lite"/>
    </source>
</evidence>
<evidence type="ECO:0000305" key="5"/>
<comment type="function">
    <text evidence="2">Transcriptional activator that increases RNA Pol II processivity, thereby increasing the level of full-length viral transcripts. Recognizes a hairpin structure at the 5'-LTR of the nascent viral mRNAs referred to as the transactivation responsive RNA element (TAR) and recruits the cyclin T1-CDK9 complex (P-TEFb complex) that will in turn hyperphosphorylate the RNA polymerase II to allow efficient elongation. The CDK9 component of P-TEFb and other Tat-activated kinases hyperphosphorylate the C-terminus of RNA Pol II that becomes stabilized and much more processive.</text>
</comment>
<comment type="function">
    <text evidence="1">Extracellular circulating Tat can be endocytosed by surrounding uninfected cells via the binding to several surface receptors. Endosomal low pH allows Tat to cross the endosome membrane to enter the cytosol and eventually further translocate into the nucleus, thereby inducing severe cell dysfunctions ranging from cell activation to cell death. Through (By similarity).</text>
</comment>
<comment type="subunit">
    <text evidence="1">Interacts with host CCNT1. Associates with the P-TEFb complex composed at least of Tat, P-TEFb (CDK9 and CCNT1), TAR RNA, RNA Pol II. Interacts with CCNT2; the resulting complex is unable to bind to TAR RNA (By similarity).</text>
</comment>
<comment type="subcellular location">
    <subcellularLocation>
        <location evidence="1">Host nucleus</location>
        <location evidence="1">Host nucleolus</location>
    </subcellularLocation>
</comment>
<comment type="miscellaneous">
    <text>The 155 isolate is from a monkey imported from Kenya.</text>
</comment>
<comment type="similarity">
    <text evidence="5">Belongs to the lentiviruses Tat family.</text>
</comment>
<proteinExistence type="inferred from homology"/>
<accession>P27975</accession>
<dbReference type="EMBL" id="M29975">
    <property type="protein sequence ID" value="AAA91909.1"/>
    <property type="molecule type" value="Genomic_RNA"/>
</dbReference>
<dbReference type="Proteomes" id="UP000258159">
    <property type="component" value="Segment"/>
</dbReference>
<dbReference type="GO" id="GO:0044196">
    <property type="term" value="C:host cell nucleolus"/>
    <property type="evidence" value="ECO:0007669"/>
    <property type="project" value="UniProtKB-SubCell"/>
</dbReference>
<dbReference type="GO" id="GO:0003723">
    <property type="term" value="F:RNA binding"/>
    <property type="evidence" value="ECO:0007669"/>
    <property type="project" value="UniProtKB-KW"/>
</dbReference>
<dbReference type="GO" id="GO:0001070">
    <property type="term" value="F:RNA-binding transcription regulator activity"/>
    <property type="evidence" value="ECO:0007669"/>
    <property type="project" value="InterPro"/>
</dbReference>
<dbReference type="GO" id="GO:0050434">
    <property type="term" value="P:positive regulation of viral transcription"/>
    <property type="evidence" value="ECO:0007669"/>
    <property type="project" value="InterPro"/>
</dbReference>
<dbReference type="Gene3D" id="4.10.20.10">
    <property type="entry name" value="Tat domain"/>
    <property type="match status" value="1"/>
</dbReference>
<dbReference type="InterPro" id="IPR001831">
    <property type="entry name" value="IV_Tat"/>
</dbReference>
<dbReference type="InterPro" id="IPR036963">
    <property type="entry name" value="Tat_dom_sf"/>
</dbReference>
<dbReference type="Pfam" id="PF00539">
    <property type="entry name" value="Tat"/>
    <property type="match status" value="1"/>
</dbReference>
<dbReference type="PRINTS" id="PR00055">
    <property type="entry name" value="HIVTATDOMAIN"/>
</dbReference>
<sequence>MDKGEEDQDVSHQDLIKQYRKPLETCTNKCFCKKCCYHCQFCFLRKGLGITYHAFRTRRKKIASADRIPVPQQSISIRGRDSQTTQESQKKVEEQAKANLRISRKNLGDETRGPVGAGN</sequence>
<name>TAT_SIVV1</name>
<feature type="chain" id="PRO_0000085376" description="Protein Tat">
    <location>
        <begin position="1"/>
        <end position="119"/>
    </location>
</feature>
<feature type="region of interest" description="Cysteine-rich" evidence="1">
    <location>
        <begin position="26"/>
        <end position="42"/>
    </location>
</feature>
<feature type="region of interest" description="Core" evidence="1">
    <location>
        <begin position="43"/>
        <end position="53"/>
    </location>
</feature>
<feature type="region of interest" description="Disordered" evidence="4">
    <location>
        <begin position="65"/>
        <end position="119"/>
    </location>
</feature>
<feature type="short sequence motif" description="Nuclear localization signal, and RNA-binding (TAR)" evidence="3">
    <location>
        <begin position="54"/>
        <end position="60"/>
    </location>
</feature>
<feature type="compositionally biased region" description="Polar residues" evidence="4">
    <location>
        <begin position="71"/>
        <end position="87"/>
    </location>
</feature>
<reference key="1">
    <citation type="journal article" date="1990" name="J. Virol.">
        <title>Simian immunodeficiency viruses from African green monkeys display unusual genetic diversity.</title>
        <authorList>
            <person name="Johnson P.R."/>
            <person name="Fomsgaard A."/>
            <person name="Allan J.S."/>
            <person name="Gravell M."/>
            <person name="London W.T."/>
            <person name="Olmstead R.A."/>
            <person name="Hirsch V.M."/>
        </authorList>
    </citation>
    <scope>NUCLEOTIDE SEQUENCE [GENOMIC RNA]</scope>
</reference>
<organism>
    <name type="scientific">Simian immunodeficiency virus agm.vervet (isolate AGM155)</name>
    <name type="common">SIV-agm.ver</name>
    <name type="synonym">Simian immunodeficiency virus African green monkey vervet</name>
    <dbReference type="NCBI Taxonomy" id="11727"/>
    <lineage>
        <taxon>Viruses</taxon>
        <taxon>Riboviria</taxon>
        <taxon>Pararnavirae</taxon>
        <taxon>Artverviricota</taxon>
        <taxon>Revtraviricetes</taxon>
        <taxon>Ortervirales</taxon>
        <taxon>Retroviridae</taxon>
        <taxon>Orthoretrovirinae</taxon>
        <taxon>Lentivirus</taxon>
        <taxon>Simian immunodeficiency virus</taxon>
    </lineage>
</organism>
<keyword id="KW-0010">Activator</keyword>
<keyword id="KW-1048">Host nucleus</keyword>
<keyword id="KW-0945">Host-virus interaction</keyword>
<keyword id="KW-0694">RNA-binding</keyword>
<keyword id="KW-0804">Transcription</keyword>
<keyword id="KW-0805">Transcription regulation</keyword>
<gene>
    <name type="primary">tat</name>
</gene>
<protein>
    <recommendedName>
        <fullName>Protein Tat</fullName>
    </recommendedName>
    <alternativeName>
        <fullName>Transactivating regulatory protein</fullName>
    </alternativeName>
</protein>
<organismHost>
    <name type="scientific">Cercopithecidae</name>
    <name type="common">Old World monkeys</name>
    <dbReference type="NCBI Taxonomy" id="9527"/>
</organismHost>